<protein>
    <recommendedName>
        <fullName evidence="1">Molybdenum import ATP-binding protein ModC</fullName>
        <ecNumber evidence="1">7.3.2.5</ecNumber>
    </recommendedName>
</protein>
<name>MODC_RHOP2</name>
<proteinExistence type="inferred from homology"/>
<feature type="chain" id="PRO_0000271686" description="Molybdenum import ATP-binding protein ModC">
    <location>
        <begin position="1"/>
        <end position="377"/>
    </location>
</feature>
<feature type="domain" description="ABC transporter" evidence="1">
    <location>
        <begin position="4"/>
        <end position="240"/>
    </location>
</feature>
<feature type="domain" description="Mop" evidence="2">
    <location>
        <begin position="299"/>
        <end position="369"/>
    </location>
</feature>
<feature type="binding site" evidence="1">
    <location>
        <begin position="38"/>
        <end position="45"/>
    </location>
    <ligand>
        <name>ATP</name>
        <dbReference type="ChEBI" id="CHEBI:30616"/>
    </ligand>
</feature>
<reference key="1">
    <citation type="submission" date="2006-01" db="EMBL/GenBank/DDBJ databases">
        <title>Complete sequence of Rhodopseudomonas palustris HaA2.</title>
        <authorList>
            <consortium name="US DOE Joint Genome Institute"/>
            <person name="Copeland A."/>
            <person name="Lucas S."/>
            <person name="Lapidus A."/>
            <person name="Barry K."/>
            <person name="Detter J.C."/>
            <person name="Glavina T."/>
            <person name="Hammon N."/>
            <person name="Israni S."/>
            <person name="Pitluck S."/>
            <person name="Chain P."/>
            <person name="Malfatti S."/>
            <person name="Shin M."/>
            <person name="Vergez L."/>
            <person name="Schmutz J."/>
            <person name="Larimer F."/>
            <person name="Land M."/>
            <person name="Hauser L."/>
            <person name="Pelletier D.A."/>
            <person name="Kyrpides N."/>
            <person name="Anderson I."/>
            <person name="Oda Y."/>
            <person name="Harwood C.S."/>
            <person name="Richardson P."/>
        </authorList>
    </citation>
    <scope>NUCLEOTIDE SEQUENCE [LARGE SCALE GENOMIC DNA]</scope>
    <source>
        <strain>HaA2</strain>
    </source>
</reference>
<dbReference type="EC" id="7.3.2.5" evidence="1"/>
<dbReference type="EMBL" id="CP000250">
    <property type="protein sequence ID" value="ABD05570.1"/>
    <property type="molecule type" value="Genomic_DNA"/>
</dbReference>
<dbReference type="RefSeq" id="WP_011439759.1">
    <property type="nucleotide sequence ID" value="NC_007778.1"/>
</dbReference>
<dbReference type="SMR" id="Q2J1U0"/>
<dbReference type="STRING" id="316058.RPB_0859"/>
<dbReference type="KEGG" id="rpb:RPB_0859"/>
<dbReference type="eggNOG" id="COG4148">
    <property type="taxonomic scope" value="Bacteria"/>
</dbReference>
<dbReference type="HOGENOM" id="CLU_000604_1_1_5"/>
<dbReference type="OrthoDB" id="8134152at2"/>
<dbReference type="Proteomes" id="UP000008809">
    <property type="component" value="Chromosome"/>
</dbReference>
<dbReference type="GO" id="GO:0005886">
    <property type="term" value="C:plasma membrane"/>
    <property type="evidence" value="ECO:0007669"/>
    <property type="project" value="UniProtKB-SubCell"/>
</dbReference>
<dbReference type="GO" id="GO:0015412">
    <property type="term" value="F:ABC-type molybdate transporter activity"/>
    <property type="evidence" value="ECO:0007669"/>
    <property type="project" value="UniProtKB-EC"/>
</dbReference>
<dbReference type="GO" id="GO:0005524">
    <property type="term" value="F:ATP binding"/>
    <property type="evidence" value="ECO:0007669"/>
    <property type="project" value="UniProtKB-KW"/>
</dbReference>
<dbReference type="GO" id="GO:0016887">
    <property type="term" value="F:ATP hydrolysis activity"/>
    <property type="evidence" value="ECO:0007669"/>
    <property type="project" value="InterPro"/>
</dbReference>
<dbReference type="Gene3D" id="2.40.50.100">
    <property type="match status" value="1"/>
</dbReference>
<dbReference type="Gene3D" id="3.40.50.300">
    <property type="entry name" value="P-loop containing nucleotide triphosphate hydrolases"/>
    <property type="match status" value="1"/>
</dbReference>
<dbReference type="InterPro" id="IPR003593">
    <property type="entry name" value="AAA+_ATPase"/>
</dbReference>
<dbReference type="InterPro" id="IPR003439">
    <property type="entry name" value="ABC_transporter-like_ATP-bd"/>
</dbReference>
<dbReference type="InterPro" id="IPR017871">
    <property type="entry name" value="ABC_transporter-like_CS"/>
</dbReference>
<dbReference type="InterPro" id="IPR008995">
    <property type="entry name" value="Mo/tungstate-bd_C_term_dom"/>
</dbReference>
<dbReference type="InterPro" id="IPR011868">
    <property type="entry name" value="ModC_ABC_ATP-bd"/>
</dbReference>
<dbReference type="InterPro" id="IPR050334">
    <property type="entry name" value="Molybdenum_import_ModC"/>
</dbReference>
<dbReference type="InterPro" id="IPR004606">
    <property type="entry name" value="Mop_domain"/>
</dbReference>
<dbReference type="InterPro" id="IPR027417">
    <property type="entry name" value="P-loop_NTPase"/>
</dbReference>
<dbReference type="InterPro" id="IPR005116">
    <property type="entry name" value="Transp-assoc_OB_typ1"/>
</dbReference>
<dbReference type="NCBIfam" id="TIGR02142">
    <property type="entry name" value="modC_ABC"/>
    <property type="match status" value="1"/>
</dbReference>
<dbReference type="PANTHER" id="PTHR43514">
    <property type="entry name" value="ABC TRANSPORTER I FAMILY MEMBER 10"/>
    <property type="match status" value="1"/>
</dbReference>
<dbReference type="PANTHER" id="PTHR43514:SF10">
    <property type="entry name" value="MOLYBDENUM IMPORT ATP-BINDING PROTEIN MODC 2"/>
    <property type="match status" value="1"/>
</dbReference>
<dbReference type="Pfam" id="PF00005">
    <property type="entry name" value="ABC_tran"/>
    <property type="match status" value="1"/>
</dbReference>
<dbReference type="Pfam" id="PF03459">
    <property type="entry name" value="TOBE"/>
    <property type="match status" value="1"/>
</dbReference>
<dbReference type="SMART" id="SM00382">
    <property type="entry name" value="AAA"/>
    <property type="match status" value="1"/>
</dbReference>
<dbReference type="SUPFAM" id="SSF50331">
    <property type="entry name" value="MOP-like"/>
    <property type="match status" value="1"/>
</dbReference>
<dbReference type="SUPFAM" id="SSF52540">
    <property type="entry name" value="P-loop containing nucleoside triphosphate hydrolases"/>
    <property type="match status" value="1"/>
</dbReference>
<dbReference type="PROSITE" id="PS00211">
    <property type="entry name" value="ABC_TRANSPORTER_1"/>
    <property type="match status" value="1"/>
</dbReference>
<dbReference type="PROSITE" id="PS50893">
    <property type="entry name" value="ABC_TRANSPORTER_2"/>
    <property type="match status" value="1"/>
</dbReference>
<dbReference type="PROSITE" id="PS51241">
    <property type="entry name" value="MODC"/>
    <property type="match status" value="1"/>
</dbReference>
<dbReference type="PROSITE" id="PS51866">
    <property type="entry name" value="MOP"/>
    <property type="match status" value="1"/>
</dbReference>
<organism>
    <name type="scientific">Rhodopseudomonas palustris (strain HaA2)</name>
    <dbReference type="NCBI Taxonomy" id="316058"/>
    <lineage>
        <taxon>Bacteria</taxon>
        <taxon>Pseudomonadati</taxon>
        <taxon>Pseudomonadota</taxon>
        <taxon>Alphaproteobacteria</taxon>
        <taxon>Hyphomicrobiales</taxon>
        <taxon>Nitrobacteraceae</taxon>
        <taxon>Rhodopseudomonas</taxon>
    </lineage>
</organism>
<comment type="function">
    <text evidence="1">Part of the ABC transporter complex ModABC involved in molybdenum import. Responsible for energy coupling to the transport system.</text>
</comment>
<comment type="catalytic activity">
    <reaction evidence="1">
        <text>molybdate(out) + ATP + H2O = molybdate(in) + ADP + phosphate + H(+)</text>
        <dbReference type="Rhea" id="RHEA:22020"/>
        <dbReference type="ChEBI" id="CHEBI:15377"/>
        <dbReference type="ChEBI" id="CHEBI:15378"/>
        <dbReference type="ChEBI" id="CHEBI:30616"/>
        <dbReference type="ChEBI" id="CHEBI:36264"/>
        <dbReference type="ChEBI" id="CHEBI:43474"/>
        <dbReference type="ChEBI" id="CHEBI:456216"/>
        <dbReference type="EC" id="7.3.2.5"/>
    </reaction>
</comment>
<comment type="subunit">
    <text evidence="1">The complex is composed of two ATP-binding proteins (ModC), two transmembrane proteins (ModB) and a solute-binding protein (ModA).</text>
</comment>
<comment type="subcellular location">
    <subcellularLocation>
        <location evidence="1">Cell inner membrane</location>
        <topology evidence="1">Peripheral membrane protein</topology>
    </subcellularLocation>
</comment>
<comment type="similarity">
    <text evidence="1">Belongs to the ABC transporter superfamily. Molybdate importer (TC 3.A.1.8) family.</text>
</comment>
<accession>Q2J1U0</accession>
<evidence type="ECO:0000255" key="1">
    <source>
        <dbReference type="HAMAP-Rule" id="MF_01705"/>
    </source>
</evidence>
<evidence type="ECO:0000255" key="2">
    <source>
        <dbReference type="PROSITE-ProRule" id="PRU01213"/>
    </source>
</evidence>
<sequence length="377" mass="40103">MRAIAPRSIRGEFRGRLGGFALDAAFSVPATGITGLFGPSGCGKSTVLRCLAGLQRLPGGRCDVDGDVWQDEATFLKPHQRPIGYVFQEASLFQHLSVRANLLYGAPRGGADAAEGAVGFDEVIELLGLSHLLDRAPRNLSGGERQRVAIGRALLSQPKLLLMDEPLSALDRLTKDEILPFLERLHARLSLPVIYVSHDITEIERLADHLILMRAGKVLAAGPLTELQSDPALPLATARDAAVNVDAIAESYDSVYGLLTLRLDGGRLLVPSAPVQPGEARRIRIAAGDVSLAREAPHRTSILNILPARIATTSPVGPNEVLVVLALGPGGQGARLLARVTRRSWDQLQLAAGDELFAQIKGVALAPERGAARDSAS</sequence>
<keyword id="KW-0067">ATP-binding</keyword>
<keyword id="KW-0997">Cell inner membrane</keyword>
<keyword id="KW-1003">Cell membrane</keyword>
<keyword id="KW-0472">Membrane</keyword>
<keyword id="KW-0500">Molybdenum</keyword>
<keyword id="KW-0547">Nucleotide-binding</keyword>
<keyword id="KW-1185">Reference proteome</keyword>
<keyword id="KW-1278">Translocase</keyword>
<keyword id="KW-0813">Transport</keyword>
<gene>
    <name evidence="1" type="primary">modC</name>
    <name type="ordered locus">RPB_0859</name>
</gene>